<keyword id="KW-0903">Direct protein sequencing</keyword>
<keyword id="KW-0378">Hydrolase</keyword>
<keyword id="KW-0488">Methylation</keyword>
<keyword id="KW-0597">Phosphoprotein</keyword>
<keyword id="KW-0645">Protease</keyword>
<keyword id="KW-0732">Signal</keyword>
<keyword id="KW-0788">Thiol protease</keyword>
<reference evidence="6 8" key="1">
    <citation type="journal article" date="2004" name="Mar. Biotechnol.">
        <title>Molecular cloning of silicatein gene from marine sponge Petrosia ficiformis (Porifera, Demospongiae) and development of primmorphs as a model for biosilicification studies.</title>
        <authorList>
            <person name="Pozzolini M."/>
            <person name="Sturla L."/>
            <person name="Cerrano C."/>
            <person name="Bavestrello G."/>
            <person name="Camardella L."/>
            <person name="Parodi A.M."/>
            <person name="Raheli F."/>
            <person name="Benatti U."/>
            <person name="Muller W.E."/>
            <person name="Giovine M."/>
        </authorList>
    </citation>
    <scope>NUCLEOTIDE SEQUENCE [MRNA]</scope>
    <scope>PROTEIN SEQUENCE OF 123-137 AND 177-190</scope>
    <source>
        <tissue evidence="4">Spicule</tissue>
    </source>
</reference>
<reference evidence="6 8" key="2">
    <citation type="journal article" date="2009" name="J. Proteome Res.">
        <title>Primary structure and post-translational modifications of silicatein beta from the marine sponge Petrosia ficiformis (Poiret, 1789).</title>
        <authorList>
            <person name="Armirotti A."/>
            <person name="Damonte G."/>
            <person name="Pozzolini M."/>
            <person name="Mussino F."/>
            <person name="Cerrano C."/>
            <person name="Salis A."/>
            <person name="Benatti U."/>
            <person name="Giovine M."/>
        </authorList>
    </citation>
    <scope>IDENTIFICATION BY MASS SPECTROMETRY</scope>
    <scope>FUNCTION</scope>
    <scope>SUBUNIT</scope>
    <scope>METHYLATION AT LEU-123</scope>
    <scope>PHOSPHORYLATION AT SER-188; TYR-219 AND SER-335</scope>
    <scope>LACK OF DISULFIDE BONDS</scope>
</reference>
<name>SILIC_PETFI</name>
<feature type="signal peptide" evidence="2">
    <location>
        <begin position="1"/>
        <end position="18"/>
    </location>
</feature>
<feature type="propeptide" id="PRO_0000403217" evidence="2 4 5">
    <location>
        <begin position="19"/>
        <end position="122"/>
    </location>
</feature>
<feature type="chain" id="PRO_0000403218" description="Silicatein" evidence="4 5">
    <location>
        <begin position="123"/>
        <end position="339"/>
    </location>
</feature>
<feature type="active site" evidence="1 3">
    <location>
        <position position="286"/>
    </location>
</feature>
<feature type="active site" evidence="1 3">
    <location>
        <position position="306"/>
    </location>
</feature>
<feature type="modified residue" description="N,N-dimethylleucine; alternate" evidence="5">
    <location>
        <position position="123"/>
    </location>
</feature>
<feature type="modified residue" description="N-methylleucine; alternate" evidence="5">
    <location>
        <position position="123"/>
    </location>
</feature>
<feature type="modified residue" description="Phosphoserine" evidence="5">
    <location>
        <position position="188"/>
    </location>
</feature>
<feature type="modified residue" description="Phosphotyrosine" evidence="5">
    <location>
        <position position="219"/>
    </location>
</feature>
<feature type="modified residue" description="Phosphoserine" evidence="5">
    <location>
        <position position="335"/>
    </location>
</feature>
<feature type="sequence conflict" description="In Ref. 1; AA sequence." evidence="6" ref="1">
    <original>E</original>
    <variation>G</variation>
    <location>
        <position position="190"/>
    </location>
</feature>
<organism>
    <name type="scientific">Petrosia ficiformis</name>
    <name type="common">Common Mediterranean sponge</name>
    <dbReference type="NCBI Taxonomy" id="68564"/>
    <lineage>
        <taxon>Eukaryota</taxon>
        <taxon>Metazoa</taxon>
        <taxon>Porifera</taxon>
        <taxon>Demospongiae</taxon>
        <taxon>Heteroscleromorpha</taxon>
        <taxon>Haplosclerida</taxon>
        <taxon>Petrosiidae</taxon>
        <taxon>Petrosia</taxon>
    </lineage>
</organism>
<evidence type="ECO:0000250" key="1">
    <source>
        <dbReference type="UniProtKB" id="P07711"/>
    </source>
</evidence>
<evidence type="ECO:0000255" key="2"/>
<evidence type="ECO:0000255" key="3">
    <source>
        <dbReference type="PROSITE-ProRule" id="PRU10090"/>
    </source>
</evidence>
<evidence type="ECO:0000269" key="4">
    <source>
    </source>
</evidence>
<evidence type="ECO:0000269" key="5">
    <source>
    </source>
</evidence>
<evidence type="ECO:0000305" key="6"/>
<evidence type="ECO:0000305" key="7">
    <source>
    </source>
</evidence>
<evidence type="ECO:0000312" key="8">
    <source>
        <dbReference type="EMBL" id="AAO23671.1"/>
    </source>
</evidence>
<dbReference type="EC" id="3.4.22.-"/>
<dbReference type="EMBL" id="AY158071">
    <property type="protein sequence ID" value="AAO23671.1"/>
    <property type="molecule type" value="mRNA"/>
</dbReference>
<dbReference type="SMR" id="Q6YD92"/>
<dbReference type="iPTMnet" id="Q6YD92"/>
<dbReference type="GO" id="GO:0008234">
    <property type="term" value="F:cysteine-type peptidase activity"/>
    <property type="evidence" value="ECO:0007669"/>
    <property type="project" value="UniProtKB-KW"/>
</dbReference>
<dbReference type="GO" id="GO:0006508">
    <property type="term" value="P:proteolysis"/>
    <property type="evidence" value="ECO:0007669"/>
    <property type="project" value="UniProtKB-KW"/>
</dbReference>
<dbReference type="CDD" id="cd02248">
    <property type="entry name" value="Peptidase_C1A"/>
    <property type="match status" value="1"/>
</dbReference>
<dbReference type="FunFam" id="3.90.70.10:FF:000006">
    <property type="entry name" value="Cathepsin S"/>
    <property type="match status" value="1"/>
</dbReference>
<dbReference type="Gene3D" id="3.90.70.10">
    <property type="entry name" value="Cysteine proteinases"/>
    <property type="match status" value="1"/>
</dbReference>
<dbReference type="InterPro" id="IPR038765">
    <property type="entry name" value="Papain-like_cys_pep_sf"/>
</dbReference>
<dbReference type="InterPro" id="IPR025661">
    <property type="entry name" value="Pept_asp_AS"/>
</dbReference>
<dbReference type="InterPro" id="IPR013128">
    <property type="entry name" value="Peptidase_C1A"/>
</dbReference>
<dbReference type="InterPro" id="IPR000668">
    <property type="entry name" value="Peptidase_C1A_C"/>
</dbReference>
<dbReference type="InterPro" id="IPR039417">
    <property type="entry name" value="Peptidase_C1A_papain-like"/>
</dbReference>
<dbReference type="InterPro" id="IPR013201">
    <property type="entry name" value="Prot_inhib_I29"/>
</dbReference>
<dbReference type="PANTHER" id="PTHR12411">
    <property type="entry name" value="CYSTEINE PROTEASE FAMILY C1-RELATED"/>
    <property type="match status" value="1"/>
</dbReference>
<dbReference type="Pfam" id="PF08246">
    <property type="entry name" value="Inhibitor_I29"/>
    <property type="match status" value="1"/>
</dbReference>
<dbReference type="Pfam" id="PF00112">
    <property type="entry name" value="Peptidase_C1"/>
    <property type="match status" value="1"/>
</dbReference>
<dbReference type="PRINTS" id="PR00705">
    <property type="entry name" value="PAPAIN"/>
</dbReference>
<dbReference type="SMART" id="SM00848">
    <property type="entry name" value="Inhibitor_I29"/>
    <property type="match status" value="1"/>
</dbReference>
<dbReference type="SMART" id="SM00645">
    <property type="entry name" value="Pept_C1"/>
    <property type="match status" value="1"/>
</dbReference>
<dbReference type="SUPFAM" id="SSF54001">
    <property type="entry name" value="Cysteine proteinases"/>
    <property type="match status" value="1"/>
</dbReference>
<dbReference type="PROSITE" id="PS00640">
    <property type="entry name" value="THIOL_PROTEASE_ASN"/>
    <property type="match status" value="1"/>
</dbReference>
<accession>Q6YD92</accession>
<comment type="function">
    <text evidence="5">Polymerizes silica around the axial filament during spicule formation.</text>
</comment>
<comment type="subunit">
    <text evidence="5">Homodimer. Homodimerization occurs as a result of non-covalent interactions and not through disulfide linkages between the two monomers.</text>
</comment>
<comment type="similarity">
    <text evidence="3">Belongs to the peptidase C1 family.</text>
</comment>
<comment type="caution">
    <text evidence="7">After extraction of the protein with ammonium fluoride and hydrofluoric acid, His-137 and Cys-279 were reported to be oxidized but could be the artifactual results of sample handling. Leu-123 was also reported to be mono- and dimethylated. Despite sequence similarity with cathepsins, silicatein lacks the intra- and interchain disulfide bonds for conserved cysteines. No numeric data was provided to support the mass-spectrometric interpretations.</text>
</comment>
<protein>
    <recommendedName>
        <fullName evidence="8">Silicatein</fullName>
        <ecNumber>3.4.22.-</ecNumber>
    </recommendedName>
</protein>
<proteinExistence type="evidence at protein level"/>
<sequence length="339" mass="37477">MAIVYGAILFQIILIACAEFPPEWHAWKATHSISYESEHEERRRHVVWQQNQEYIDQHNKYKEQFGYTLEMNKFGDMSNAEFAELMMCVQDYNHHGNLTESLLADNKFKGRVREYQAPATVSLPETVDWRTGGAVTHVKDQLRCGCSYAFAAVGALEGAAALARGRTASLSEQNVLDCSVPYGNHGCSCEDVNNAFMYVIDNGGLDTTSSYPYVSRQYYCKFKSSGVGATATGIVTISSGDESSLESALATAGPVAVYIDASHSSFQFYKYGVLNVPNCSRSKLSHAMILIGYGTTSSKKYWLLKNSWGPNWGISGYIKMSRGMSNQCGIATYASFPTL</sequence>